<accession>P32170</accession>
<accession>Q2M8K0</accession>
<accession>Q6BEY0</accession>
<protein>
    <recommendedName>
        <fullName evidence="1 9">L-rhamnose isomerase</fullName>
        <shortName evidence="10">RhamIso</shortName>
        <ecNumber evidence="1 4 5 8">5.3.1.14</ecNumber>
    </recommendedName>
</protein>
<keyword id="KW-0002">3D-structure</keyword>
<keyword id="KW-0963">Cytoplasm</keyword>
<keyword id="KW-0413">Isomerase</keyword>
<keyword id="KW-0464">Manganese</keyword>
<keyword id="KW-0479">Metal-binding</keyword>
<keyword id="KW-1185">Reference proteome</keyword>
<keyword id="KW-0684">Rhamnose metabolism</keyword>
<keyword id="KW-0862">Zinc</keyword>
<dbReference type="EC" id="5.3.1.14" evidence="1 4 5 8"/>
<dbReference type="EMBL" id="X60472">
    <property type="protein sequence ID" value="CAA43002.1"/>
    <property type="molecule type" value="Genomic_DNA"/>
</dbReference>
<dbReference type="EMBL" id="L19201">
    <property type="protein sequence ID" value="AAB03036.1"/>
    <property type="molecule type" value="Genomic_DNA"/>
</dbReference>
<dbReference type="EMBL" id="U00096">
    <property type="protein sequence ID" value="AAT48234.1"/>
    <property type="molecule type" value="Genomic_DNA"/>
</dbReference>
<dbReference type="EMBL" id="AP009048">
    <property type="protein sequence ID" value="BAE77406.1"/>
    <property type="molecule type" value="Genomic_DNA"/>
</dbReference>
<dbReference type="PIR" id="S40847">
    <property type="entry name" value="S40847"/>
</dbReference>
<dbReference type="RefSeq" id="WP_001311268.1">
    <property type="nucleotide sequence ID" value="NZ_SSZK01000014.1"/>
</dbReference>
<dbReference type="RefSeq" id="YP_026276.1">
    <property type="nucleotide sequence ID" value="NC_000913.3"/>
</dbReference>
<dbReference type="PDB" id="1D8W">
    <property type="method" value="X-ray"/>
    <property type="resolution" value="1.60 A"/>
    <property type="chains" value="A/B/C/D=1-419"/>
</dbReference>
<dbReference type="PDB" id="1DE5">
    <property type="method" value="X-ray"/>
    <property type="resolution" value="2.20 A"/>
    <property type="chains" value="A/B/C/D=1-419"/>
</dbReference>
<dbReference type="PDB" id="1DE6">
    <property type="method" value="X-ray"/>
    <property type="resolution" value="2.10 A"/>
    <property type="chains" value="A/B/C/D=1-419"/>
</dbReference>
<dbReference type="PDBsum" id="1D8W"/>
<dbReference type="PDBsum" id="1DE5"/>
<dbReference type="PDBsum" id="1DE6"/>
<dbReference type="SMR" id="P32170"/>
<dbReference type="BioGRID" id="4260678">
    <property type="interactions" value="8"/>
</dbReference>
<dbReference type="DIP" id="DIP-10690N"/>
<dbReference type="FunCoup" id="P32170">
    <property type="interactions" value="224"/>
</dbReference>
<dbReference type="STRING" id="511145.b3903"/>
<dbReference type="DrugBank" id="DB02399">
    <property type="generic name" value="L-Rhamnitol"/>
</dbReference>
<dbReference type="DrugBank" id="DB02961">
    <property type="generic name" value="Rhamnose"/>
</dbReference>
<dbReference type="PaxDb" id="511145-b3903"/>
<dbReference type="EnsemblBacteria" id="AAT48234">
    <property type="protein sequence ID" value="AAT48234"/>
    <property type="gene ID" value="b3903"/>
</dbReference>
<dbReference type="GeneID" id="948400"/>
<dbReference type="KEGG" id="ecj:JW5561"/>
<dbReference type="KEGG" id="eco:b3903"/>
<dbReference type="KEGG" id="ecoc:C3026_21100"/>
<dbReference type="PATRIC" id="fig|1411691.4.peg.2803"/>
<dbReference type="EchoBASE" id="EB1813"/>
<dbReference type="eggNOG" id="COG4806">
    <property type="taxonomic scope" value="Bacteria"/>
</dbReference>
<dbReference type="HOGENOM" id="CLU_052790_0_0_6"/>
<dbReference type="InParanoid" id="P32170"/>
<dbReference type="OMA" id="SIHCWQG"/>
<dbReference type="OrthoDB" id="9766697at2"/>
<dbReference type="PhylomeDB" id="P32170"/>
<dbReference type="BioCyc" id="EcoCyc:RHAMNISOM-MONOMER"/>
<dbReference type="BioCyc" id="MetaCyc:RHAMNISOM-MONOMER"/>
<dbReference type="BRENDA" id="5.3.1.14">
    <property type="organism ID" value="2026"/>
</dbReference>
<dbReference type="UniPathway" id="UPA00541">
    <property type="reaction ID" value="UER00601"/>
</dbReference>
<dbReference type="EvolutionaryTrace" id="P32170"/>
<dbReference type="PRO" id="PR:P32170"/>
<dbReference type="Proteomes" id="UP000000625">
    <property type="component" value="Chromosome"/>
</dbReference>
<dbReference type="GO" id="GO:0005737">
    <property type="term" value="C:cytoplasm"/>
    <property type="evidence" value="ECO:0007669"/>
    <property type="project" value="UniProtKB-SubCell"/>
</dbReference>
<dbReference type="GO" id="GO:0032991">
    <property type="term" value="C:protein-containing complex"/>
    <property type="evidence" value="ECO:0000314"/>
    <property type="project" value="CAFA"/>
</dbReference>
<dbReference type="GO" id="GO:0042802">
    <property type="term" value="F:identical protein binding"/>
    <property type="evidence" value="ECO:0000314"/>
    <property type="project" value="EcoCyc"/>
</dbReference>
<dbReference type="GO" id="GO:0008740">
    <property type="term" value="F:L-rhamnose isomerase activity"/>
    <property type="evidence" value="ECO:0000314"/>
    <property type="project" value="EcoCyc"/>
</dbReference>
<dbReference type="GO" id="GO:0030145">
    <property type="term" value="F:manganese ion binding"/>
    <property type="evidence" value="ECO:0000314"/>
    <property type="project" value="CAFA"/>
</dbReference>
<dbReference type="GO" id="GO:0033296">
    <property type="term" value="F:rhamnose binding"/>
    <property type="evidence" value="ECO:0000314"/>
    <property type="project" value="CAFA"/>
</dbReference>
<dbReference type="GO" id="GO:0008270">
    <property type="term" value="F:zinc ion binding"/>
    <property type="evidence" value="ECO:0000314"/>
    <property type="project" value="CAFA"/>
</dbReference>
<dbReference type="GO" id="GO:0019324">
    <property type="term" value="P:L-lyxose metabolic process"/>
    <property type="evidence" value="ECO:0000270"/>
    <property type="project" value="EcoCyc"/>
</dbReference>
<dbReference type="GO" id="GO:0051289">
    <property type="term" value="P:protein homotetramerization"/>
    <property type="evidence" value="ECO:0000314"/>
    <property type="project" value="EcoCyc"/>
</dbReference>
<dbReference type="GO" id="GO:0019301">
    <property type="term" value="P:rhamnose catabolic process"/>
    <property type="evidence" value="ECO:0000315"/>
    <property type="project" value="EcoCyc"/>
</dbReference>
<dbReference type="DisProt" id="DP00429"/>
<dbReference type="FunFam" id="3.20.20.150:FF:000006">
    <property type="entry name" value="L-rhamnose isomerase"/>
    <property type="match status" value="1"/>
</dbReference>
<dbReference type="Gene3D" id="3.20.20.150">
    <property type="entry name" value="Divalent-metal-dependent TIM barrel enzymes"/>
    <property type="match status" value="1"/>
</dbReference>
<dbReference type="HAMAP" id="MF_00541">
    <property type="entry name" value="RhaA"/>
    <property type="match status" value="1"/>
</dbReference>
<dbReference type="InterPro" id="IPR050337">
    <property type="entry name" value="L-rhamnose_isomerase"/>
</dbReference>
<dbReference type="InterPro" id="IPR009308">
    <property type="entry name" value="Rhamnose_isomerase"/>
</dbReference>
<dbReference type="InterPro" id="IPR036237">
    <property type="entry name" value="Xyl_isomerase-like_sf"/>
</dbReference>
<dbReference type="NCBIfam" id="NF002203">
    <property type="entry name" value="PRK01076.1"/>
    <property type="match status" value="1"/>
</dbReference>
<dbReference type="NCBIfam" id="TIGR01748">
    <property type="entry name" value="rhaA"/>
    <property type="match status" value="1"/>
</dbReference>
<dbReference type="PANTHER" id="PTHR30268">
    <property type="entry name" value="L-RHAMNOSE ISOMERASE"/>
    <property type="match status" value="1"/>
</dbReference>
<dbReference type="PANTHER" id="PTHR30268:SF0">
    <property type="entry name" value="L-RHAMNOSE ISOMERASE"/>
    <property type="match status" value="1"/>
</dbReference>
<dbReference type="Pfam" id="PF06134">
    <property type="entry name" value="RhaA"/>
    <property type="match status" value="1"/>
</dbReference>
<dbReference type="SUPFAM" id="SSF51658">
    <property type="entry name" value="Xylose isomerase-like"/>
    <property type="match status" value="1"/>
</dbReference>
<sequence>MTTQLEQAWELAKQRFAAVGIDVEEALRQLDRLPVSMHCWQGDDVSGFENPEGSLTGGIQATGNYPGKARNASELRADLEQAMRLIPGPKRLNLHAIYLESDTPVSRDQIKPEHFKNWVEWAKANQLGLDFNPSCFSHPLSADGFTLSHADDSIRQFWIDHCKASRRVSAYFGEQLGTPSVMNIWIPDGMKDITVDRLAPRQRLLAALDEVISEKLNPAHHIDAVESKLFGIGAESYTVGSNEFYMGYATSRQTALCLDAGHFHPTEVISDKISAAMLYVPQLLLHVSRPVRWDSDHVVLLDDETQAIASEIVRHDLFDRVHIGLDFFDASINRIAAWVIGTRNMKKALLRALLEPTAELRKLEAAGDYTARLALLEEQKSLPWQAVWEMYCQRHDTPAGSEWLESVRAYEKEILSRRG</sequence>
<feature type="chain" id="PRO_0000090552" description="L-rhamnose isomerase">
    <location>
        <begin position="1"/>
        <end position="419"/>
    </location>
</feature>
<feature type="binding site" evidence="3 15">
    <location>
        <position position="95"/>
    </location>
    <ligand>
        <name>L-rhamnose</name>
        <dbReference type="ChEBI" id="CHEBI:16055"/>
    </ligand>
</feature>
<feature type="binding site" evidence="3 15">
    <location>
        <begin position="226"/>
        <end position="228"/>
    </location>
    <ligand>
        <name>L-rhamnose</name>
        <dbReference type="ChEBI" id="CHEBI:16055"/>
    </ligand>
</feature>
<feature type="binding site" evidence="3 13 14 15">
    <location>
        <position position="226"/>
    </location>
    <ligand>
        <name>Zn(2+)</name>
        <dbReference type="ChEBI" id="CHEBI:29105"/>
    </ligand>
</feature>
<feature type="binding site" evidence="3 13 14 15">
    <location>
        <position position="259"/>
    </location>
    <ligand>
        <name>Zn(2+)</name>
        <dbReference type="ChEBI" id="CHEBI:29105"/>
    </ligand>
</feature>
<feature type="binding site" evidence="3 15">
    <location>
        <position position="262"/>
    </location>
    <ligand>
        <name>L-rhamnose</name>
        <dbReference type="ChEBI" id="CHEBI:16055"/>
    </ligand>
</feature>
<feature type="binding site" evidence="1 3 15">
    <location>
        <position position="262"/>
    </location>
    <ligand>
        <name>Mn(2+)</name>
        <dbReference type="ChEBI" id="CHEBI:29035"/>
    </ligand>
</feature>
<feature type="binding site" evidence="3 13 14 15">
    <location>
        <position position="286"/>
    </location>
    <ligand>
        <name>Zn(2+)</name>
        <dbReference type="ChEBI" id="CHEBI:29105"/>
    </ligand>
</feature>
<feature type="binding site" evidence="1 3 15">
    <location>
        <position position="294"/>
    </location>
    <ligand>
        <name>Mn(2+)</name>
        <dbReference type="ChEBI" id="CHEBI:29035"/>
    </ligand>
</feature>
<feature type="binding site" evidence="1 3 15">
    <location>
        <position position="296"/>
    </location>
    <ligand>
        <name>Mn(2+)</name>
        <dbReference type="ChEBI" id="CHEBI:29035"/>
    </ligand>
</feature>
<feature type="binding site" evidence="3 15">
    <location>
        <position position="326"/>
    </location>
    <ligand>
        <name>L-rhamnose</name>
        <dbReference type="ChEBI" id="CHEBI:16055"/>
    </ligand>
</feature>
<feature type="binding site" evidence="3 13 14 15">
    <location>
        <position position="326"/>
    </location>
    <ligand>
        <name>Zn(2+)</name>
        <dbReference type="ChEBI" id="CHEBI:29105"/>
    </ligand>
</feature>
<feature type="sequence conflict" description="In Ref. 2; AAB03036." evidence="11" ref="2">
    <original>EL</original>
    <variation>DV</variation>
    <location>
        <begin position="359"/>
        <end position="360"/>
    </location>
</feature>
<feature type="sequence conflict" description="In Ref. 1; CAA43002." evidence="11" ref="1">
    <original>A</original>
    <variation>P</variation>
    <location>
        <position position="366"/>
    </location>
</feature>
<feature type="helix" evidence="16">
    <location>
        <begin position="4"/>
        <end position="18"/>
    </location>
</feature>
<feature type="helix" evidence="16">
    <location>
        <begin position="23"/>
        <end position="30"/>
    </location>
</feature>
<feature type="strand" evidence="16">
    <location>
        <begin position="35"/>
        <end position="38"/>
    </location>
</feature>
<feature type="helix" evidence="16">
    <location>
        <begin position="39"/>
        <end position="42"/>
    </location>
</feature>
<feature type="turn" evidence="16">
    <location>
        <begin position="43"/>
        <end position="45"/>
    </location>
</feature>
<feature type="strand" evidence="17">
    <location>
        <begin position="48"/>
        <end position="53"/>
    </location>
</feature>
<feature type="helix" evidence="16">
    <location>
        <begin position="72"/>
        <end position="84"/>
    </location>
</feature>
<feature type="strand" evidence="16">
    <location>
        <begin position="90"/>
        <end position="95"/>
    </location>
</feature>
<feature type="helix" evidence="16">
    <location>
        <begin position="96"/>
        <end position="98"/>
    </location>
</feature>
<feature type="helix" evidence="16">
    <location>
        <begin position="107"/>
        <end position="109"/>
    </location>
</feature>
<feature type="helix" evidence="16">
    <location>
        <begin position="112"/>
        <end position="115"/>
    </location>
</feature>
<feature type="helix" evidence="16">
    <location>
        <begin position="116"/>
        <end position="124"/>
    </location>
</feature>
<feature type="strand" evidence="16">
    <location>
        <begin position="128"/>
        <end position="132"/>
    </location>
</feature>
<feature type="strand" evidence="16">
    <location>
        <begin position="136"/>
        <end position="138"/>
    </location>
</feature>
<feature type="helix" evidence="16">
    <location>
        <begin position="139"/>
        <end position="141"/>
    </location>
</feature>
<feature type="helix" evidence="16">
    <location>
        <begin position="152"/>
        <end position="176"/>
    </location>
</feature>
<feature type="strand" evidence="16">
    <location>
        <begin position="180"/>
        <end position="184"/>
    </location>
</feature>
<feature type="strand" evidence="16">
    <location>
        <begin position="189"/>
        <end position="192"/>
    </location>
</feature>
<feature type="helix" evidence="16">
    <location>
        <begin position="198"/>
        <end position="211"/>
    </location>
</feature>
<feature type="turn" evidence="16">
    <location>
        <begin position="218"/>
        <end position="220"/>
    </location>
</feature>
<feature type="strand" evidence="16">
    <location>
        <begin position="221"/>
        <end position="226"/>
    </location>
</feature>
<feature type="strand" evidence="16">
    <location>
        <begin position="236"/>
        <end position="240"/>
    </location>
</feature>
<feature type="helix" evidence="16">
    <location>
        <begin position="242"/>
        <end position="252"/>
    </location>
</feature>
<feature type="strand" evidence="16">
    <location>
        <begin position="255"/>
        <end position="259"/>
    </location>
</feature>
<feature type="helix" evidence="16">
    <location>
        <begin position="269"/>
        <end position="276"/>
    </location>
</feature>
<feature type="turn" evidence="16">
    <location>
        <begin position="277"/>
        <end position="279"/>
    </location>
</feature>
<feature type="strand" evidence="16">
    <location>
        <begin position="283"/>
        <end position="287"/>
    </location>
</feature>
<feature type="strand" evidence="16">
    <location>
        <begin position="291"/>
        <end position="294"/>
    </location>
</feature>
<feature type="helix" evidence="16">
    <location>
        <begin position="303"/>
        <end position="314"/>
    </location>
</feature>
<feature type="turn" evidence="16">
    <location>
        <begin position="318"/>
        <end position="320"/>
    </location>
</feature>
<feature type="strand" evidence="16">
    <location>
        <begin position="321"/>
        <end position="325"/>
    </location>
</feature>
<feature type="helix" evidence="16">
    <location>
        <begin position="334"/>
        <end position="353"/>
    </location>
</feature>
<feature type="helix" evidence="16">
    <location>
        <begin position="357"/>
        <end position="364"/>
    </location>
</feature>
<feature type="turn" evidence="16">
    <location>
        <begin position="365"/>
        <end position="367"/>
    </location>
</feature>
<feature type="helix" evidence="16">
    <location>
        <begin position="369"/>
        <end position="379"/>
    </location>
</feature>
<feature type="helix" evidence="16">
    <location>
        <begin position="384"/>
        <end position="394"/>
    </location>
</feature>
<feature type="helix" evidence="16">
    <location>
        <begin position="403"/>
        <end position="413"/>
    </location>
</feature>
<feature type="turn" evidence="16">
    <location>
        <begin position="414"/>
        <end position="416"/>
    </location>
</feature>
<organism>
    <name type="scientific">Escherichia coli (strain K12)</name>
    <dbReference type="NCBI Taxonomy" id="83333"/>
    <lineage>
        <taxon>Bacteria</taxon>
        <taxon>Pseudomonadati</taxon>
        <taxon>Pseudomonadota</taxon>
        <taxon>Gammaproteobacteria</taxon>
        <taxon>Enterobacterales</taxon>
        <taxon>Enterobacteriaceae</taxon>
        <taxon>Escherichia</taxon>
    </lineage>
</organism>
<proteinExistence type="evidence at protein level"/>
<comment type="function">
    <text evidence="4 5 6 8">Catalyzes the interconversion of L-rhamnose and L-rhamnulose (PubMed:14243758, PubMed:1650346, PubMed:2558952, PubMed:8564401). Can also catalyze the isomerization of L-lyxose to L-xylulose (PubMed:1650346).</text>
</comment>
<comment type="catalytic activity">
    <reaction evidence="1 4 5 8">
        <text>L-rhamnopyranose = L-rhamnulose</text>
        <dbReference type="Rhea" id="RHEA:23160"/>
        <dbReference type="ChEBI" id="CHEBI:17897"/>
        <dbReference type="ChEBI" id="CHEBI:62346"/>
        <dbReference type="EC" id="5.3.1.14"/>
    </reaction>
</comment>
<comment type="catalytic activity">
    <reaction evidence="5">
        <text>L-lyxopyranose = L-xylulose</text>
        <dbReference type="Rhea" id="RHEA:28058"/>
        <dbReference type="ChEBI" id="CHEBI:17399"/>
        <dbReference type="ChEBI" id="CHEBI:62321"/>
    </reaction>
</comment>
<comment type="cofactor">
    <cofactor evidence="1 3 4">
        <name>Mn(2+)</name>
        <dbReference type="ChEBI" id="CHEBI:29035"/>
    </cofactor>
    <text evidence="1 3">Binds 1 Mn(2+) ion per subunit.</text>
</comment>
<comment type="biophysicochemical properties">
    <kinetics>
        <KM evidence="4 5">2 mM for L-rhamnose</KM>
        <KM evidence="5">5 mM for L-lyxose</KM>
        <KM evidence="4">1.7 mM for L-rhamnulose</KM>
        <Vmax evidence="5">6.2 umol/min/mg enzyme with L-rhamnose as substrate</Vmax>
        <Vmax evidence="5">6.0 umol/min/mg enzyme with L-lyxose as substrate</Vmax>
    </kinetics>
    <phDependence>
        <text evidence="4">Optimum pH is 7.6.</text>
    </phDependence>
</comment>
<comment type="pathway">
    <text evidence="1 12">Carbohydrate degradation; L-rhamnose degradation; glycerone phosphate from L-rhamnose: step 1/3.</text>
</comment>
<comment type="subunit">
    <text evidence="1 3">Homotetramer.</text>
</comment>
<comment type="subcellular location">
    <subcellularLocation>
        <location evidence="1 11">Cytoplasm</location>
    </subcellularLocation>
</comment>
<comment type="induction">
    <text evidence="2 5 7">Induced by L-rhamnose via the RhaR-RhaS regulatory cascade. Binding of the cAMP receptor protein (CRP) is required for full expression (PubMed:10852886, PubMed:8230210). Also induced by L-lyxose (PubMed:1650346).</text>
</comment>
<comment type="miscellaneous">
    <text>In the crystal structure, RhaA appears to bind a zinc ion at a structural site. However, the metal ion may be different in vivo.</text>
</comment>
<comment type="similarity">
    <text evidence="1 11">Belongs to the rhamnose isomerase family.</text>
</comment>
<name>RHAA_ECOLI</name>
<evidence type="ECO:0000255" key="1">
    <source>
        <dbReference type="HAMAP-Rule" id="MF_00541"/>
    </source>
</evidence>
<evidence type="ECO:0000269" key="2">
    <source>
    </source>
</evidence>
<evidence type="ECO:0000269" key="3">
    <source>
    </source>
</evidence>
<evidence type="ECO:0000269" key="4">
    <source>
    </source>
</evidence>
<evidence type="ECO:0000269" key="5">
    <source>
    </source>
</evidence>
<evidence type="ECO:0000269" key="6">
    <source>
    </source>
</evidence>
<evidence type="ECO:0000269" key="7">
    <source>
    </source>
</evidence>
<evidence type="ECO:0000269" key="8">
    <source>
    </source>
</evidence>
<evidence type="ECO:0000303" key="9">
    <source>
    </source>
</evidence>
<evidence type="ECO:0000303" key="10">
    <source>
    </source>
</evidence>
<evidence type="ECO:0000305" key="11"/>
<evidence type="ECO:0000305" key="12">
    <source>
    </source>
</evidence>
<evidence type="ECO:0007744" key="13">
    <source>
        <dbReference type="PDB" id="1D8W"/>
    </source>
</evidence>
<evidence type="ECO:0007744" key="14">
    <source>
        <dbReference type="PDB" id="1DE5"/>
    </source>
</evidence>
<evidence type="ECO:0007744" key="15">
    <source>
        <dbReference type="PDB" id="1DE6"/>
    </source>
</evidence>
<evidence type="ECO:0007829" key="16">
    <source>
        <dbReference type="PDB" id="1D8W"/>
    </source>
</evidence>
<evidence type="ECO:0007829" key="17">
    <source>
        <dbReference type="PDB" id="1DE6"/>
    </source>
</evidence>
<gene>
    <name evidence="1" type="primary">rhaA</name>
    <name type="ordered locus">b3903</name>
    <name type="ordered locus">JW5561</name>
</gene>
<reference key="1">
    <citation type="journal article" date="1993" name="J. Bacteriol.">
        <title>Sequencing and characterization of a gene cluster encoding the enzymes for L-rhamnose metabolism in Escherichia coli.</title>
        <authorList>
            <person name="Moralejo P."/>
            <person name="Egan S.M."/>
            <person name="Hidalgo E.F."/>
            <person name="Aguilar J."/>
        </authorList>
    </citation>
    <scope>NUCLEOTIDE SEQUENCE [GENOMIC DNA]</scope>
    <source>
        <strain>K12</strain>
    </source>
</reference>
<reference key="2">
    <citation type="journal article" date="1993" name="Nucleic Acids Res.">
        <title>Analysis of the Escherichia coli genome. III. DNA sequence of the region from 87.2 to 89.2 minutes.</title>
        <authorList>
            <person name="Plunkett G. III"/>
            <person name="Burland V."/>
            <person name="Daniels D.L."/>
            <person name="Blattner F.R."/>
        </authorList>
    </citation>
    <scope>NUCLEOTIDE SEQUENCE [LARGE SCALE GENOMIC DNA]</scope>
    <source>
        <strain>K12 / MG1655 / ATCC 47076</strain>
    </source>
</reference>
<reference key="3">
    <citation type="journal article" date="1997" name="Science">
        <title>The complete genome sequence of Escherichia coli K-12.</title>
        <authorList>
            <person name="Blattner F.R."/>
            <person name="Plunkett G. III"/>
            <person name="Bloch C.A."/>
            <person name="Perna N.T."/>
            <person name="Burland V."/>
            <person name="Riley M."/>
            <person name="Collado-Vides J."/>
            <person name="Glasner J.D."/>
            <person name="Rode C.K."/>
            <person name="Mayhew G.F."/>
            <person name="Gregor J."/>
            <person name="Davis N.W."/>
            <person name="Kirkpatrick H.A."/>
            <person name="Goeden M.A."/>
            <person name="Rose D.J."/>
            <person name="Mau B."/>
            <person name="Shao Y."/>
        </authorList>
    </citation>
    <scope>NUCLEOTIDE SEQUENCE [LARGE SCALE GENOMIC DNA]</scope>
    <source>
        <strain>K12 / MG1655 / ATCC 47076</strain>
    </source>
</reference>
<reference key="4">
    <citation type="journal article" date="2006" name="Nucleic Acids Res.">
        <title>Escherichia coli K-12: a cooperatively developed annotation snapshot -- 2005.</title>
        <authorList>
            <person name="Riley M."/>
            <person name="Abe T."/>
            <person name="Arnaud M.B."/>
            <person name="Berlyn M.K.B."/>
            <person name="Blattner F.R."/>
            <person name="Chaudhuri R.R."/>
            <person name="Glasner J.D."/>
            <person name="Horiuchi T."/>
            <person name="Keseler I.M."/>
            <person name="Kosuge T."/>
            <person name="Mori H."/>
            <person name="Perna N.T."/>
            <person name="Plunkett G. III"/>
            <person name="Rudd K.E."/>
            <person name="Serres M.H."/>
            <person name="Thomas G.H."/>
            <person name="Thomson N.R."/>
            <person name="Wishart D."/>
            <person name="Wanner B.L."/>
        </authorList>
    </citation>
    <scope>SEQUENCE REVISION TO 359-360</scope>
</reference>
<reference key="5">
    <citation type="journal article" date="2006" name="Mol. Syst. Biol.">
        <title>Highly accurate genome sequences of Escherichia coli K-12 strains MG1655 and W3110.</title>
        <authorList>
            <person name="Hayashi K."/>
            <person name="Morooka N."/>
            <person name="Yamamoto Y."/>
            <person name="Fujita K."/>
            <person name="Isono K."/>
            <person name="Choi S."/>
            <person name="Ohtsubo E."/>
            <person name="Baba T."/>
            <person name="Wanner B.L."/>
            <person name="Mori H."/>
            <person name="Horiuchi T."/>
        </authorList>
    </citation>
    <scope>NUCLEOTIDE SEQUENCE [LARGE SCALE GENOMIC DNA]</scope>
    <source>
        <strain>K12 / W3110 / ATCC 27325 / DSM 5911</strain>
    </source>
</reference>
<reference key="6">
    <citation type="journal article" date="1964" name="Biochim. Biophys. Acta">
        <title>The metabolism of L-rhamnose in Escherichia coli. I. L-rhamnose isomerase.</title>
        <authorList>
            <person name="Takagi Y."/>
            <person name="Sawada H."/>
        </authorList>
    </citation>
    <scope>FUNCTION</scope>
    <scope>CATALYTIC ACTIVITY</scope>
    <scope>COFACTOR</scope>
    <scope>BIOPHYSICOCHEMICAL PROPERTIES</scope>
    <source>
        <strain>B</strain>
    </source>
</reference>
<reference key="7">
    <citation type="journal article" date="1989" name="FEMS Microbiol. Lett.">
        <title>Identification of the rhaA, rhaB and rhaD gene products from Escherichia coli K-12.</title>
        <authorList>
            <person name="Badia J."/>
            <person name="Baldoma L."/>
            <person name="Aguilar J."/>
            <person name="Boronat A."/>
        </authorList>
    </citation>
    <scope>FUNCTION</scope>
</reference>
<reference key="8">
    <citation type="journal article" date="1991" name="J. Bacteriol.">
        <title>L-lyxose metabolism employs the L-rhamnose pathway in mutant cells of Escherichia coli adapted to grow on L-lyxose.</title>
        <authorList>
            <person name="Badia J."/>
            <person name="Gimenez R."/>
            <person name="Baldoma L."/>
            <person name="Barnes E."/>
            <person name="Fessner W.D."/>
            <person name="Aguilar J."/>
        </authorList>
    </citation>
    <scope>FUNCTION</scope>
    <scope>CATALYTIC ACTIVITY</scope>
    <scope>BIOPHYSICOCHEMICAL PROPERTIES</scope>
    <scope>INDUCTION</scope>
    <source>
        <strain>K12</strain>
    </source>
</reference>
<reference key="9">
    <citation type="journal article" date="1993" name="J. Mol. Biol.">
        <title>A regulatory cascade in the induction of rhaBAD.</title>
        <authorList>
            <person name="Egan S.M."/>
            <person name="Schleif R.F."/>
        </authorList>
    </citation>
    <scope>INDUCTION</scope>
    <source>
        <strain>ECL116</strain>
    </source>
</reference>
<reference key="10">
    <citation type="journal article" date="1995" name="Bioorg. Med. Chem.">
        <title>Cloning and overexpression of rhamnose isomerase and fucose isomerase.</title>
        <authorList>
            <person name="Garcia-Junceda E."/>
            <person name="Shen G.J."/>
            <person name="Alajarin R."/>
            <person name="Wong C.H."/>
        </authorList>
    </citation>
    <scope>FUNCTION</scope>
    <scope>CATALYTIC ACTIVITY</scope>
</reference>
<reference key="11">
    <citation type="journal article" date="2000" name="J. Bacteriol.">
        <title>Roles of cyclic AMP receptor protein and the carboxyl-terminal domain of the alpha subunit in transcription activation of the Escherichia coli rhaBAD operon.</title>
        <authorList>
            <person name="Holcroft C.C."/>
            <person name="Egan S.M."/>
        </authorList>
    </citation>
    <scope>INDUCTION</scope>
</reference>
<reference evidence="13 14 15" key="12">
    <citation type="journal article" date="2000" name="J. Mol. Biol.">
        <title>The structure of rhamnose isomerase from Escherichia coli and its relation with xylose isomerase illustrates a change between inter and intra-subunit complementation during evolution.</title>
        <authorList>
            <person name="Korndoerfer I.P."/>
            <person name="Fessner W.-D."/>
            <person name="Matthews B.W."/>
        </authorList>
    </citation>
    <scope>X-RAY CRYSTALLOGRAPHY (2.1 ANGSTROMS) IN COMPLEX WITH MANGANESE; ZINC AND ALDEHYDO-L-RHAMNOSE</scope>
    <scope>COFACTOR</scope>
    <scope>SUBUNIT</scope>
</reference>